<accession>Q4FQ66</accession>
<reference key="1">
    <citation type="journal article" date="2010" name="Appl. Environ. Microbiol.">
        <title>The genome sequence of Psychrobacter arcticus 273-4, a psychroactive Siberian permafrost bacterium, reveals mechanisms for adaptation to low-temperature growth.</title>
        <authorList>
            <person name="Ayala-del-Rio H.L."/>
            <person name="Chain P.S."/>
            <person name="Grzymski J.J."/>
            <person name="Ponder M.A."/>
            <person name="Ivanova N."/>
            <person name="Bergholz P.W."/>
            <person name="Di Bartolo G."/>
            <person name="Hauser L."/>
            <person name="Land M."/>
            <person name="Bakermans C."/>
            <person name="Rodrigues D."/>
            <person name="Klappenbach J."/>
            <person name="Zarka D."/>
            <person name="Larimer F."/>
            <person name="Richardson P."/>
            <person name="Murray A."/>
            <person name="Thomashow M."/>
            <person name="Tiedje J.M."/>
        </authorList>
    </citation>
    <scope>NUCLEOTIDE SEQUENCE [LARGE SCALE GENOMIC DNA]</scope>
    <source>
        <strain>DSM 17307 / VKM B-2377 / 273-4</strain>
    </source>
</reference>
<sequence>MKISEQWLRQWVNPNNSSEQLADQLTMAGLEIDDRFAVARAFSGVVVGEVISVEQHPDADKLRVTQVNIGAVEPLQIVCGAPNVTVGMKVPVATVGAVLPSDDGTGFKIKNGNLRGVDSNGMLCGASEIDLTDNIDGLLELPTDAPIGTDIREYLGLDNQILDISITPNRGDCFSVRGIAREISVINDLPLQMPNIPDNNQVIHNEAMPAVTVSAVEACPRYFLQSISNIDRTIDTPKWMQDALVQSGLRSHNFLVDVTNYVLMELGQPLHAFDADTIVGDIVVRLAQPEETITLLNEQTISLTGDELVIADDKGALALAGIMGGQRSSVTDSTTNIVLESAFFNPLAIAARARRFGLHTDASQRFERGVDFELPALALARAVDLITSVTGSQAGQIVAMENSDHLPARAPITLPITKVRDVIGIEIEPVVMVRILTQLGFKVEQQADSLICTPPSYRFDMSIKEDLIEEIARIYGYDNIPSILPHLQVSMDYDDTADLTHEMKLALVDNGYMEAISFSFSDAKLEALLDDKALGEVLALANPISSDLAVMRRTLLSSLLPCVQYNLNRQQSRVRFFETGLSFVGHSVSDLVQTPSIAIVAVGDVWDEQAYQNRALDFYDLKHDIEQLLPAKIDNARIRYERSQLAFLHPGQSAKLYIDDQYVGWLGQLHPNTAKQLDLTTTWVAQLSLAPLLTLAREQHAITTPSKFPQVRRDIAILVDSDISLQTLESTIRKASGTLLTDLWLFDVYQGEKVPAGQRSLAFALIWQDKTQTLSDDAVKTATDKVVQALTVEHSAQLRDS</sequence>
<protein>
    <recommendedName>
        <fullName evidence="1">Phenylalanine--tRNA ligase beta subunit</fullName>
        <ecNumber evidence="1">6.1.1.20</ecNumber>
    </recommendedName>
    <alternativeName>
        <fullName evidence="1">Phenylalanyl-tRNA synthetase beta subunit</fullName>
        <shortName evidence="1">PheRS</shortName>
    </alternativeName>
</protein>
<dbReference type="EC" id="6.1.1.20" evidence="1"/>
<dbReference type="EMBL" id="CP000082">
    <property type="protein sequence ID" value="AAZ19842.1"/>
    <property type="molecule type" value="Genomic_DNA"/>
</dbReference>
<dbReference type="RefSeq" id="WP_011281250.1">
    <property type="nucleotide sequence ID" value="NC_007204.1"/>
</dbReference>
<dbReference type="SMR" id="Q4FQ66"/>
<dbReference type="STRING" id="259536.Psyc_1995"/>
<dbReference type="KEGG" id="par:Psyc_1995"/>
<dbReference type="eggNOG" id="COG0072">
    <property type="taxonomic scope" value="Bacteria"/>
</dbReference>
<dbReference type="eggNOG" id="COG0073">
    <property type="taxonomic scope" value="Bacteria"/>
</dbReference>
<dbReference type="HOGENOM" id="CLU_016891_0_0_6"/>
<dbReference type="OrthoDB" id="9805455at2"/>
<dbReference type="Proteomes" id="UP000000546">
    <property type="component" value="Chromosome"/>
</dbReference>
<dbReference type="GO" id="GO:0009328">
    <property type="term" value="C:phenylalanine-tRNA ligase complex"/>
    <property type="evidence" value="ECO:0007669"/>
    <property type="project" value="TreeGrafter"/>
</dbReference>
<dbReference type="GO" id="GO:0005524">
    <property type="term" value="F:ATP binding"/>
    <property type="evidence" value="ECO:0007669"/>
    <property type="project" value="UniProtKB-UniRule"/>
</dbReference>
<dbReference type="GO" id="GO:0000287">
    <property type="term" value="F:magnesium ion binding"/>
    <property type="evidence" value="ECO:0007669"/>
    <property type="project" value="UniProtKB-UniRule"/>
</dbReference>
<dbReference type="GO" id="GO:0004826">
    <property type="term" value="F:phenylalanine-tRNA ligase activity"/>
    <property type="evidence" value="ECO:0007669"/>
    <property type="project" value="UniProtKB-UniRule"/>
</dbReference>
<dbReference type="GO" id="GO:0000049">
    <property type="term" value="F:tRNA binding"/>
    <property type="evidence" value="ECO:0007669"/>
    <property type="project" value="UniProtKB-KW"/>
</dbReference>
<dbReference type="GO" id="GO:0006432">
    <property type="term" value="P:phenylalanyl-tRNA aminoacylation"/>
    <property type="evidence" value="ECO:0007669"/>
    <property type="project" value="UniProtKB-UniRule"/>
</dbReference>
<dbReference type="CDD" id="cd00769">
    <property type="entry name" value="PheRS_beta_core"/>
    <property type="match status" value="1"/>
</dbReference>
<dbReference type="CDD" id="cd02796">
    <property type="entry name" value="tRNA_bind_bactPheRS"/>
    <property type="match status" value="1"/>
</dbReference>
<dbReference type="FunFam" id="2.40.50.140:FF:000045">
    <property type="entry name" value="Phenylalanine--tRNA ligase beta subunit"/>
    <property type="match status" value="1"/>
</dbReference>
<dbReference type="FunFam" id="3.30.56.10:FF:000002">
    <property type="entry name" value="Phenylalanine--tRNA ligase beta subunit"/>
    <property type="match status" value="1"/>
</dbReference>
<dbReference type="FunFam" id="3.30.70.380:FF:000001">
    <property type="entry name" value="Phenylalanine--tRNA ligase beta subunit"/>
    <property type="match status" value="1"/>
</dbReference>
<dbReference type="FunFam" id="3.50.40.10:FF:000001">
    <property type="entry name" value="Phenylalanine--tRNA ligase beta subunit"/>
    <property type="match status" value="1"/>
</dbReference>
<dbReference type="Gene3D" id="3.30.56.10">
    <property type="match status" value="2"/>
</dbReference>
<dbReference type="Gene3D" id="3.30.930.10">
    <property type="entry name" value="Bira Bifunctional Protein, Domain 2"/>
    <property type="match status" value="1"/>
</dbReference>
<dbReference type="Gene3D" id="3.30.70.380">
    <property type="entry name" value="Ferrodoxin-fold anticodon-binding domain"/>
    <property type="match status" value="1"/>
</dbReference>
<dbReference type="Gene3D" id="2.40.50.140">
    <property type="entry name" value="Nucleic acid-binding proteins"/>
    <property type="match status" value="1"/>
</dbReference>
<dbReference type="Gene3D" id="3.50.40.10">
    <property type="entry name" value="Phenylalanyl-trna Synthetase, Chain B, domain 3"/>
    <property type="match status" value="1"/>
</dbReference>
<dbReference type="HAMAP" id="MF_00283">
    <property type="entry name" value="Phe_tRNA_synth_beta1"/>
    <property type="match status" value="1"/>
</dbReference>
<dbReference type="InterPro" id="IPR045864">
    <property type="entry name" value="aa-tRNA-synth_II/BPL/LPL"/>
</dbReference>
<dbReference type="InterPro" id="IPR005146">
    <property type="entry name" value="B3/B4_tRNA-bd"/>
</dbReference>
<dbReference type="InterPro" id="IPR009061">
    <property type="entry name" value="DNA-bd_dom_put_sf"/>
</dbReference>
<dbReference type="InterPro" id="IPR005121">
    <property type="entry name" value="Fdx_antiC-bd"/>
</dbReference>
<dbReference type="InterPro" id="IPR036690">
    <property type="entry name" value="Fdx_antiC-bd_sf"/>
</dbReference>
<dbReference type="InterPro" id="IPR012340">
    <property type="entry name" value="NA-bd_OB-fold"/>
</dbReference>
<dbReference type="InterPro" id="IPR045060">
    <property type="entry name" value="Phe-tRNA-ligase_IIc_bsu"/>
</dbReference>
<dbReference type="InterPro" id="IPR004532">
    <property type="entry name" value="Phe-tRNA-ligase_IIc_bsu_bact"/>
</dbReference>
<dbReference type="InterPro" id="IPR020825">
    <property type="entry name" value="Phe-tRNA_synthase-like_B3/B4"/>
</dbReference>
<dbReference type="InterPro" id="IPR041616">
    <property type="entry name" value="PheRS_beta_core"/>
</dbReference>
<dbReference type="InterPro" id="IPR002547">
    <property type="entry name" value="tRNA-bd_dom"/>
</dbReference>
<dbReference type="InterPro" id="IPR033714">
    <property type="entry name" value="tRNA_bind_bactPheRS"/>
</dbReference>
<dbReference type="InterPro" id="IPR005147">
    <property type="entry name" value="tRNA_synthase_B5-dom"/>
</dbReference>
<dbReference type="NCBIfam" id="TIGR00472">
    <property type="entry name" value="pheT_bact"/>
    <property type="match status" value="1"/>
</dbReference>
<dbReference type="NCBIfam" id="NF045760">
    <property type="entry name" value="YtpR"/>
    <property type="match status" value="1"/>
</dbReference>
<dbReference type="PANTHER" id="PTHR10947:SF0">
    <property type="entry name" value="PHENYLALANINE--TRNA LIGASE BETA SUBUNIT"/>
    <property type="match status" value="1"/>
</dbReference>
<dbReference type="PANTHER" id="PTHR10947">
    <property type="entry name" value="PHENYLALANYL-TRNA SYNTHETASE BETA CHAIN AND LEUCINE-RICH REPEAT-CONTAINING PROTEIN 47"/>
    <property type="match status" value="1"/>
</dbReference>
<dbReference type="Pfam" id="PF03483">
    <property type="entry name" value="B3_4"/>
    <property type="match status" value="1"/>
</dbReference>
<dbReference type="Pfam" id="PF03484">
    <property type="entry name" value="B5"/>
    <property type="match status" value="1"/>
</dbReference>
<dbReference type="Pfam" id="PF03147">
    <property type="entry name" value="FDX-ACB"/>
    <property type="match status" value="1"/>
</dbReference>
<dbReference type="Pfam" id="PF01588">
    <property type="entry name" value="tRNA_bind"/>
    <property type="match status" value="1"/>
</dbReference>
<dbReference type="Pfam" id="PF17759">
    <property type="entry name" value="tRNA_synthFbeta"/>
    <property type="match status" value="1"/>
</dbReference>
<dbReference type="SMART" id="SM00873">
    <property type="entry name" value="B3_4"/>
    <property type="match status" value="1"/>
</dbReference>
<dbReference type="SMART" id="SM00874">
    <property type="entry name" value="B5"/>
    <property type="match status" value="1"/>
</dbReference>
<dbReference type="SMART" id="SM00896">
    <property type="entry name" value="FDX-ACB"/>
    <property type="match status" value="1"/>
</dbReference>
<dbReference type="SUPFAM" id="SSF54991">
    <property type="entry name" value="Anticodon-binding domain of PheRS"/>
    <property type="match status" value="1"/>
</dbReference>
<dbReference type="SUPFAM" id="SSF55681">
    <property type="entry name" value="Class II aaRS and biotin synthetases"/>
    <property type="match status" value="1"/>
</dbReference>
<dbReference type="SUPFAM" id="SSF50249">
    <property type="entry name" value="Nucleic acid-binding proteins"/>
    <property type="match status" value="1"/>
</dbReference>
<dbReference type="SUPFAM" id="SSF56037">
    <property type="entry name" value="PheT/TilS domain"/>
    <property type="match status" value="1"/>
</dbReference>
<dbReference type="SUPFAM" id="SSF46955">
    <property type="entry name" value="Putative DNA-binding domain"/>
    <property type="match status" value="1"/>
</dbReference>
<dbReference type="PROSITE" id="PS51483">
    <property type="entry name" value="B5"/>
    <property type="match status" value="1"/>
</dbReference>
<dbReference type="PROSITE" id="PS51447">
    <property type="entry name" value="FDX_ACB"/>
    <property type="match status" value="1"/>
</dbReference>
<dbReference type="PROSITE" id="PS50886">
    <property type="entry name" value="TRBD"/>
    <property type="match status" value="1"/>
</dbReference>
<feature type="chain" id="PRO_0000232080" description="Phenylalanine--tRNA ligase beta subunit">
    <location>
        <begin position="1"/>
        <end position="801"/>
    </location>
</feature>
<feature type="domain" description="tRNA-binding" evidence="1">
    <location>
        <begin position="39"/>
        <end position="152"/>
    </location>
</feature>
<feature type="domain" description="B5" evidence="1">
    <location>
        <begin position="407"/>
        <end position="482"/>
    </location>
</feature>
<feature type="domain" description="FDX-ACB" evidence="1">
    <location>
        <begin position="706"/>
        <end position="799"/>
    </location>
</feature>
<feature type="binding site" evidence="1">
    <location>
        <position position="460"/>
    </location>
    <ligand>
        <name>Mg(2+)</name>
        <dbReference type="ChEBI" id="CHEBI:18420"/>
        <note>shared with alpha subunit</note>
    </ligand>
</feature>
<feature type="binding site" evidence="1">
    <location>
        <position position="466"/>
    </location>
    <ligand>
        <name>Mg(2+)</name>
        <dbReference type="ChEBI" id="CHEBI:18420"/>
        <note>shared with alpha subunit</note>
    </ligand>
</feature>
<feature type="binding site" evidence="1">
    <location>
        <position position="469"/>
    </location>
    <ligand>
        <name>Mg(2+)</name>
        <dbReference type="ChEBI" id="CHEBI:18420"/>
        <note>shared with alpha subunit</note>
    </ligand>
</feature>
<feature type="binding site" evidence="1">
    <location>
        <position position="470"/>
    </location>
    <ligand>
        <name>Mg(2+)</name>
        <dbReference type="ChEBI" id="CHEBI:18420"/>
        <note>shared with alpha subunit</note>
    </ligand>
</feature>
<keyword id="KW-0030">Aminoacyl-tRNA synthetase</keyword>
<keyword id="KW-0067">ATP-binding</keyword>
<keyword id="KW-0963">Cytoplasm</keyword>
<keyword id="KW-0436">Ligase</keyword>
<keyword id="KW-0460">Magnesium</keyword>
<keyword id="KW-0479">Metal-binding</keyword>
<keyword id="KW-0547">Nucleotide-binding</keyword>
<keyword id="KW-0648">Protein biosynthesis</keyword>
<keyword id="KW-1185">Reference proteome</keyword>
<keyword id="KW-0694">RNA-binding</keyword>
<keyword id="KW-0820">tRNA-binding</keyword>
<proteinExistence type="inferred from homology"/>
<organism>
    <name type="scientific">Psychrobacter arcticus (strain DSM 17307 / VKM B-2377 / 273-4)</name>
    <dbReference type="NCBI Taxonomy" id="259536"/>
    <lineage>
        <taxon>Bacteria</taxon>
        <taxon>Pseudomonadati</taxon>
        <taxon>Pseudomonadota</taxon>
        <taxon>Gammaproteobacteria</taxon>
        <taxon>Moraxellales</taxon>
        <taxon>Moraxellaceae</taxon>
        <taxon>Psychrobacter</taxon>
    </lineage>
</organism>
<evidence type="ECO:0000255" key="1">
    <source>
        <dbReference type="HAMAP-Rule" id="MF_00283"/>
    </source>
</evidence>
<name>SYFB_PSYA2</name>
<gene>
    <name evidence="1" type="primary">pheT</name>
    <name type="ordered locus">Psyc_1995</name>
</gene>
<comment type="catalytic activity">
    <reaction evidence="1">
        <text>tRNA(Phe) + L-phenylalanine + ATP = L-phenylalanyl-tRNA(Phe) + AMP + diphosphate + H(+)</text>
        <dbReference type="Rhea" id="RHEA:19413"/>
        <dbReference type="Rhea" id="RHEA-COMP:9668"/>
        <dbReference type="Rhea" id="RHEA-COMP:9699"/>
        <dbReference type="ChEBI" id="CHEBI:15378"/>
        <dbReference type="ChEBI" id="CHEBI:30616"/>
        <dbReference type="ChEBI" id="CHEBI:33019"/>
        <dbReference type="ChEBI" id="CHEBI:58095"/>
        <dbReference type="ChEBI" id="CHEBI:78442"/>
        <dbReference type="ChEBI" id="CHEBI:78531"/>
        <dbReference type="ChEBI" id="CHEBI:456215"/>
        <dbReference type="EC" id="6.1.1.20"/>
    </reaction>
</comment>
<comment type="cofactor">
    <cofactor evidence="1">
        <name>Mg(2+)</name>
        <dbReference type="ChEBI" id="CHEBI:18420"/>
    </cofactor>
    <text evidence="1">Binds 2 magnesium ions per tetramer.</text>
</comment>
<comment type="subunit">
    <text evidence="1">Tetramer of two alpha and two beta subunits.</text>
</comment>
<comment type="subcellular location">
    <subcellularLocation>
        <location evidence="1">Cytoplasm</location>
    </subcellularLocation>
</comment>
<comment type="similarity">
    <text evidence="1">Belongs to the phenylalanyl-tRNA synthetase beta subunit family. Type 1 subfamily.</text>
</comment>